<sequence>MPTIQQLIRHGRSMKASKTASPALEKCPQKRGVCTRVYTTTPKKPNSALRKVARVRLSNKIEVTAYIPGEGHNLQEHSIVLIRGGRVKDLPGVRYHIVRGSLDTSGVADRKQSRSKYGAKVPKAGAAPAKKK</sequence>
<dbReference type="EMBL" id="AE006470">
    <property type="protein sequence ID" value="AAM73410.1"/>
    <property type="molecule type" value="Genomic_DNA"/>
</dbReference>
<dbReference type="RefSeq" id="NP_663068.1">
    <property type="nucleotide sequence ID" value="NC_002932.3"/>
</dbReference>
<dbReference type="RefSeq" id="WP_010933847.1">
    <property type="nucleotide sequence ID" value="NC_002932.3"/>
</dbReference>
<dbReference type="SMR" id="Q8KAG8"/>
<dbReference type="STRING" id="194439.CT2194"/>
<dbReference type="EnsemblBacteria" id="AAM73410">
    <property type="protein sequence ID" value="AAM73410"/>
    <property type="gene ID" value="CT2194"/>
</dbReference>
<dbReference type="KEGG" id="cte:CT2194"/>
<dbReference type="PATRIC" id="fig|194439.7.peg.1993"/>
<dbReference type="eggNOG" id="COG0048">
    <property type="taxonomic scope" value="Bacteria"/>
</dbReference>
<dbReference type="HOGENOM" id="CLU_104295_1_2_10"/>
<dbReference type="OrthoDB" id="9802366at2"/>
<dbReference type="Proteomes" id="UP000001007">
    <property type="component" value="Chromosome"/>
</dbReference>
<dbReference type="GO" id="GO:0015935">
    <property type="term" value="C:small ribosomal subunit"/>
    <property type="evidence" value="ECO:0007669"/>
    <property type="project" value="InterPro"/>
</dbReference>
<dbReference type="GO" id="GO:0019843">
    <property type="term" value="F:rRNA binding"/>
    <property type="evidence" value="ECO:0007669"/>
    <property type="project" value="UniProtKB-UniRule"/>
</dbReference>
<dbReference type="GO" id="GO:0003735">
    <property type="term" value="F:structural constituent of ribosome"/>
    <property type="evidence" value="ECO:0007669"/>
    <property type="project" value="InterPro"/>
</dbReference>
<dbReference type="GO" id="GO:0000049">
    <property type="term" value="F:tRNA binding"/>
    <property type="evidence" value="ECO:0007669"/>
    <property type="project" value="UniProtKB-UniRule"/>
</dbReference>
<dbReference type="GO" id="GO:0006412">
    <property type="term" value="P:translation"/>
    <property type="evidence" value="ECO:0007669"/>
    <property type="project" value="UniProtKB-UniRule"/>
</dbReference>
<dbReference type="CDD" id="cd03368">
    <property type="entry name" value="Ribosomal_S12"/>
    <property type="match status" value="1"/>
</dbReference>
<dbReference type="FunFam" id="2.40.50.140:FF:000001">
    <property type="entry name" value="30S ribosomal protein S12"/>
    <property type="match status" value="1"/>
</dbReference>
<dbReference type="Gene3D" id="2.40.50.140">
    <property type="entry name" value="Nucleic acid-binding proteins"/>
    <property type="match status" value="1"/>
</dbReference>
<dbReference type="HAMAP" id="MF_00403_B">
    <property type="entry name" value="Ribosomal_uS12_B"/>
    <property type="match status" value="1"/>
</dbReference>
<dbReference type="InterPro" id="IPR012340">
    <property type="entry name" value="NA-bd_OB-fold"/>
</dbReference>
<dbReference type="InterPro" id="IPR006032">
    <property type="entry name" value="Ribosomal_uS12"/>
</dbReference>
<dbReference type="InterPro" id="IPR005679">
    <property type="entry name" value="Ribosomal_uS12_bac"/>
</dbReference>
<dbReference type="NCBIfam" id="TIGR00981">
    <property type="entry name" value="rpsL_bact"/>
    <property type="match status" value="1"/>
</dbReference>
<dbReference type="PANTHER" id="PTHR11652">
    <property type="entry name" value="30S RIBOSOMAL PROTEIN S12 FAMILY MEMBER"/>
    <property type="match status" value="1"/>
</dbReference>
<dbReference type="Pfam" id="PF00164">
    <property type="entry name" value="Ribosom_S12_S23"/>
    <property type="match status" value="1"/>
</dbReference>
<dbReference type="PIRSF" id="PIRSF002133">
    <property type="entry name" value="Ribosomal_S12/S23"/>
    <property type="match status" value="1"/>
</dbReference>
<dbReference type="PRINTS" id="PR01034">
    <property type="entry name" value="RIBOSOMALS12"/>
</dbReference>
<dbReference type="SUPFAM" id="SSF50249">
    <property type="entry name" value="Nucleic acid-binding proteins"/>
    <property type="match status" value="1"/>
</dbReference>
<dbReference type="PROSITE" id="PS00055">
    <property type="entry name" value="RIBOSOMAL_S12"/>
    <property type="match status" value="1"/>
</dbReference>
<protein>
    <recommendedName>
        <fullName evidence="2">Small ribosomal subunit protein uS12</fullName>
    </recommendedName>
    <alternativeName>
        <fullName evidence="4">30S ribosomal protein S12</fullName>
    </alternativeName>
</protein>
<proteinExistence type="inferred from homology"/>
<accession>Q8KAG8</accession>
<name>RS12_CHLTE</name>
<feature type="chain" id="PRO_0000146205" description="Small ribosomal subunit protein uS12">
    <location>
        <begin position="1"/>
        <end position="132"/>
    </location>
</feature>
<feature type="region of interest" description="Disordered" evidence="3">
    <location>
        <begin position="102"/>
        <end position="132"/>
    </location>
</feature>
<feature type="compositionally biased region" description="Low complexity" evidence="3">
    <location>
        <begin position="118"/>
        <end position="132"/>
    </location>
</feature>
<feature type="modified residue" description="3-methylthioaspartic acid" evidence="1">
    <location>
        <position position="89"/>
    </location>
</feature>
<keyword id="KW-0488">Methylation</keyword>
<keyword id="KW-1185">Reference proteome</keyword>
<keyword id="KW-0687">Ribonucleoprotein</keyword>
<keyword id="KW-0689">Ribosomal protein</keyword>
<keyword id="KW-0694">RNA-binding</keyword>
<keyword id="KW-0699">rRNA-binding</keyword>
<keyword id="KW-0820">tRNA-binding</keyword>
<gene>
    <name evidence="2" type="primary">rpsL</name>
    <name type="ordered locus">CT2194</name>
</gene>
<organism>
    <name type="scientific">Chlorobaculum tepidum (strain ATCC 49652 / DSM 12025 / NBRC 103806 / TLS)</name>
    <name type="common">Chlorobium tepidum</name>
    <dbReference type="NCBI Taxonomy" id="194439"/>
    <lineage>
        <taxon>Bacteria</taxon>
        <taxon>Pseudomonadati</taxon>
        <taxon>Chlorobiota</taxon>
        <taxon>Chlorobiia</taxon>
        <taxon>Chlorobiales</taxon>
        <taxon>Chlorobiaceae</taxon>
        <taxon>Chlorobaculum</taxon>
    </lineage>
</organism>
<comment type="function">
    <text evidence="2">With S4 and S5 plays an important role in translational accuracy.</text>
</comment>
<comment type="function">
    <text evidence="2">Interacts with and stabilizes bases of the 16S rRNA that are involved in tRNA selection in the A site and with the mRNA backbone. Located at the interface of the 30S and 50S subunits, it traverses the body of the 30S subunit contacting proteins on the other side and probably holding the rRNA structure together. The combined cluster of proteins S8, S12 and S17 appears to hold together the shoulder and platform of the 30S subunit.</text>
</comment>
<comment type="subunit">
    <text evidence="2">Part of the 30S ribosomal subunit. Contacts proteins S8 and S17. May interact with IF1 in the 30S initiation complex.</text>
</comment>
<comment type="similarity">
    <text evidence="2">Belongs to the universal ribosomal protein uS12 family.</text>
</comment>
<evidence type="ECO:0000250" key="1"/>
<evidence type="ECO:0000255" key="2">
    <source>
        <dbReference type="HAMAP-Rule" id="MF_00403"/>
    </source>
</evidence>
<evidence type="ECO:0000256" key="3">
    <source>
        <dbReference type="SAM" id="MobiDB-lite"/>
    </source>
</evidence>
<evidence type="ECO:0000305" key="4"/>
<reference key="1">
    <citation type="journal article" date="2002" name="Proc. Natl. Acad. Sci. U.S.A.">
        <title>The complete genome sequence of Chlorobium tepidum TLS, a photosynthetic, anaerobic, green-sulfur bacterium.</title>
        <authorList>
            <person name="Eisen J.A."/>
            <person name="Nelson K.E."/>
            <person name="Paulsen I.T."/>
            <person name="Heidelberg J.F."/>
            <person name="Wu M."/>
            <person name="Dodson R.J."/>
            <person name="DeBoy R.T."/>
            <person name="Gwinn M.L."/>
            <person name="Nelson W.C."/>
            <person name="Haft D.H."/>
            <person name="Hickey E.K."/>
            <person name="Peterson J.D."/>
            <person name="Durkin A.S."/>
            <person name="Kolonay J.F."/>
            <person name="Yang F."/>
            <person name="Holt I.E."/>
            <person name="Umayam L.A."/>
            <person name="Mason T.M."/>
            <person name="Brenner M."/>
            <person name="Shea T.P."/>
            <person name="Parksey D.S."/>
            <person name="Nierman W.C."/>
            <person name="Feldblyum T.V."/>
            <person name="Hansen C.L."/>
            <person name="Craven M.B."/>
            <person name="Radune D."/>
            <person name="Vamathevan J.J."/>
            <person name="Khouri H.M."/>
            <person name="White O."/>
            <person name="Gruber T.M."/>
            <person name="Ketchum K.A."/>
            <person name="Venter J.C."/>
            <person name="Tettelin H."/>
            <person name="Bryant D.A."/>
            <person name="Fraser C.M."/>
        </authorList>
    </citation>
    <scope>NUCLEOTIDE SEQUENCE [LARGE SCALE GENOMIC DNA]</scope>
    <source>
        <strain>ATCC 49652 / DSM 12025 / NBRC 103806 / TLS</strain>
    </source>
</reference>